<feature type="chain" id="PRO_0000176205" description="Ribosomal RNA small subunit methyltransferase E">
    <location>
        <begin position="1"/>
        <end position="256"/>
    </location>
</feature>
<feature type="strand" evidence="3">
    <location>
        <begin position="3"/>
        <end position="5"/>
    </location>
</feature>
<feature type="helix" evidence="3">
    <location>
        <begin position="10"/>
        <end position="14"/>
    </location>
</feature>
<feature type="strand" evidence="3">
    <location>
        <begin position="15"/>
        <end position="23"/>
    </location>
</feature>
<feature type="helix" evidence="3">
    <location>
        <begin position="24"/>
        <end position="30"/>
    </location>
</feature>
<feature type="turn" evidence="3">
    <location>
        <begin position="31"/>
        <end position="33"/>
    </location>
</feature>
<feature type="strand" evidence="3">
    <location>
        <begin position="40"/>
        <end position="44"/>
    </location>
</feature>
<feature type="strand" evidence="3">
    <location>
        <begin position="50"/>
        <end position="58"/>
    </location>
</feature>
<feature type="strand" evidence="3">
    <location>
        <begin position="60"/>
        <end position="70"/>
    </location>
</feature>
<feature type="strand" evidence="3">
    <location>
        <begin position="78"/>
        <end position="86"/>
    </location>
</feature>
<feature type="helix" evidence="3">
    <location>
        <begin position="92"/>
        <end position="102"/>
    </location>
</feature>
<feature type="strand" evidence="3">
    <location>
        <begin position="107"/>
        <end position="111"/>
    </location>
</feature>
<feature type="helix" evidence="3">
    <location>
        <begin position="122"/>
        <end position="127"/>
    </location>
</feature>
<feature type="helix" evidence="3">
    <location>
        <begin position="129"/>
        <end position="142"/>
    </location>
</feature>
<feature type="helix" evidence="3">
    <location>
        <begin position="157"/>
        <end position="163"/>
    </location>
</feature>
<feature type="helix" evidence="3">
    <location>
        <begin position="164"/>
        <end position="166"/>
    </location>
</feature>
<feature type="strand" evidence="3">
    <location>
        <begin position="167"/>
        <end position="173"/>
    </location>
</feature>
<feature type="helix" evidence="3">
    <location>
        <begin position="185"/>
        <end position="191"/>
    </location>
</feature>
<feature type="strand" evidence="3">
    <location>
        <begin position="198"/>
        <end position="203"/>
    </location>
</feature>
<feature type="helix" evidence="3">
    <location>
        <begin position="211"/>
        <end position="219"/>
    </location>
</feature>
<feature type="strand" evidence="3">
    <location>
        <begin position="223"/>
        <end position="225"/>
    </location>
</feature>
<feature type="turn" evidence="3">
    <location>
        <begin position="234"/>
        <end position="236"/>
    </location>
</feature>
<feature type="helix" evidence="3">
    <location>
        <begin position="237"/>
        <end position="250"/>
    </location>
</feature>
<gene>
    <name type="primary">rsmE</name>
    <name type="synonym">yqeU</name>
    <name type="ordered locus">BSU25440</name>
</gene>
<protein>
    <recommendedName>
        <fullName>Ribosomal RNA small subunit methyltransferase E</fullName>
        <ecNumber>2.1.1.193</ecNumber>
    </recommendedName>
    <alternativeName>
        <fullName>16S rRNA m3U1498 methyltransferase</fullName>
    </alternativeName>
</protein>
<name>RSME_BACSU</name>
<evidence type="ECO:0000250" key="1"/>
<evidence type="ECO:0000305" key="2"/>
<evidence type="ECO:0007829" key="3">
    <source>
        <dbReference type="PDB" id="1VHK"/>
    </source>
</evidence>
<reference key="1">
    <citation type="journal article" date="1996" name="Microbiology">
        <title>Systematic sequencing of the 283 kb 210 degrees-232 degrees region of the Bacillus subtilis genome containing the skin element and many sporulation genes.</title>
        <authorList>
            <person name="Mizuno M."/>
            <person name="Masuda S."/>
            <person name="Takemaru K."/>
            <person name="Hosono S."/>
            <person name="Sato T."/>
            <person name="Takeuchi M."/>
            <person name="Kobayashi Y."/>
        </authorList>
    </citation>
    <scope>NUCLEOTIDE SEQUENCE [GENOMIC DNA]</scope>
    <source>
        <strain>168 / JH642</strain>
    </source>
</reference>
<reference key="2">
    <citation type="journal article" date="1997" name="J. Bacteriol.">
        <title>The dnaK operon of Bacillus subtilis is heptacistronic.</title>
        <authorList>
            <person name="Homuth G."/>
            <person name="Masuda S."/>
            <person name="Mogk A."/>
            <person name="Kobayashi Y."/>
            <person name="Schumann W."/>
        </authorList>
    </citation>
    <scope>NUCLEOTIDE SEQUENCE [GENOMIC DNA]</scope>
    <source>
        <strain>168 / JH642</strain>
    </source>
</reference>
<reference key="3">
    <citation type="journal article" date="1997" name="Nature">
        <title>The complete genome sequence of the Gram-positive bacterium Bacillus subtilis.</title>
        <authorList>
            <person name="Kunst F."/>
            <person name="Ogasawara N."/>
            <person name="Moszer I."/>
            <person name="Albertini A.M."/>
            <person name="Alloni G."/>
            <person name="Azevedo V."/>
            <person name="Bertero M.G."/>
            <person name="Bessieres P."/>
            <person name="Bolotin A."/>
            <person name="Borchert S."/>
            <person name="Borriss R."/>
            <person name="Boursier L."/>
            <person name="Brans A."/>
            <person name="Braun M."/>
            <person name="Brignell S.C."/>
            <person name="Bron S."/>
            <person name="Brouillet S."/>
            <person name="Bruschi C.V."/>
            <person name="Caldwell B."/>
            <person name="Capuano V."/>
            <person name="Carter N.M."/>
            <person name="Choi S.-K."/>
            <person name="Codani J.-J."/>
            <person name="Connerton I.F."/>
            <person name="Cummings N.J."/>
            <person name="Daniel R.A."/>
            <person name="Denizot F."/>
            <person name="Devine K.M."/>
            <person name="Duesterhoeft A."/>
            <person name="Ehrlich S.D."/>
            <person name="Emmerson P.T."/>
            <person name="Entian K.-D."/>
            <person name="Errington J."/>
            <person name="Fabret C."/>
            <person name="Ferrari E."/>
            <person name="Foulger D."/>
            <person name="Fritz C."/>
            <person name="Fujita M."/>
            <person name="Fujita Y."/>
            <person name="Fuma S."/>
            <person name="Galizzi A."/>
            <person name="Galleron N."/>
            <person name="Ghim S.-Y."/>
            <person name="Glaser P."/>
            <person name="Goffeau A."/>
            <person name="Golightly E.J."/>
            <person name="Grandi G."/>
            <person name="Guiseppi G."/>
            <person name="Guy B.J."/>
            <person name="Haga K."/>
            <person name="Haiech J."/>
            <person name="Harwood C.R."/>
            <person name="Henaut A."/>
            <person name="Hilbert H."/>
            <person name="Holsappel S."/>
            <person name="Hosono S."/>
            <person name="Hullo M.-F."/>
            <person name="Itaya M."/>
            <person name="Jones L.-M."/>
            <person name="Joris B."/>
            <person name="Karamata D."/>
            <person name="Kasahara Y."/>
            <person name="Klaerr-Blanchard M."/>
            <person name="Klein C."/>
            <person name="Kobayashi Y."/>
            <person name="Koetter P."/>
            <person name="Koningstein G."/>
            <person name="Krogh S."/>
            <person name="Kumano M."/>
            <person name="Kurita K."/>
            <person name="Lapidus A."/>
            <person name="Lardinois S."/>
            <person name="Lauber J."/>
            <person name="Lazarevic V."/>
            <person name="Lee S.-M."/>
            <person name="Levine A."/>
            <person name="Liu H."/>
            <person name="Masuda S."/>
            <person name="Mauel C."/>
            <person name="Medigue C."/>
            <person name="Medina N."/>
            <person name="Mellado R.P."/>
            <person name="Mizuno M."/>
            <person name="Moestl D."/>
            <person name="Nakai S."/>
            <person name="Noback M."/>
            <person name="Noone D."/>
            <person name="O'Reilly M."/>
            <person name="Ogawa K."/>
            <person name="Ogiwara A."/>
            <person name="Oudega B."/>
            <person name="Park S.-H."/>
            <person name="Parro V."/>
            <person name="Pohl T.M."/>
            <person name="Portetelle D."/>
            <person name="Porwollik S."/>
            <person name="Prescott A.M."/>
            <person name="Presecan E."/>
            <person name="Pujic P."/>
            <person name="Purnelle B."/>
            <person name="Rapoport G."/>
            <person name="Rey M."/>
            <person name="Reynolds S."/>
            <person name="Rieger M."/>
            <person name="Rivolta C."/>
            <person name="Rocha E."/>
            <person name="Roche B."/>
            <person name="Rose M."/>
            <person name="Sadaie Y."/>
            <person name="Sato T."/>
            <person name="Scanlan E."/>
            <person name="Schleich S."/>
            <person name="Schroeter R."/>
            <person name="Scoffone F."/>
            <person name="Sekiguchi J."/>
            <person name="Sekowska A."/>
            <person name="Seror S.J."/>
            <person name="Serror P."/>
            <person name="Shin B.-S."/>
            <person name="Soldo B."/>
            <person name="Sorokin A."/>
            <person name="Tacconi E."/>
            <person name="Takagi T."/>
            <person name="Takahashi H."/>
            <person name="Takemaru K."/>
            <person name="Takeuchi M."/>
            <person name="Tamakoshi A."/>
            <person name="Tanaka T."/>
            <person name="Terpstra P."/>
            <person name="Tognoni A."/>
            <person name="Tosato V."/>
            <person name="Uchiyama S."/>
            <person name="Vandenbol M."/>
            <person name="Vannier F."/>
            <person name="Vassarotti A."/>
            <person name="Viari A."/>
            <person name="Wambutt R."/>
            <person name="Wedler E."/>
            <person name="Wedler H."/>
            <person name="Weitzenegger T."/>
            <person name="Winters P."/>
            <person name="Wipat A."/>
            <person name="Yamamoto H."/>
            <person name="Yamane K."/>
            <person name="Yasumoto K."/>
            <person name="Yata K."/>
            <person name="Yoshida K."/>
            <person name="Yoshikawa H.-F."/>
            <person name="Zumstein E."/>
            <person name="Yoshikawa H."/>
            <person name="Danchin A."/>
        </authorList>
    </citation>
    <scope>NUCLEOTIDE SEQUENCE [LARGE SCALE GENOMIC DNA]</scope>
    <source>
        <strain>168</strain>
    </source>
</reference>
<reference key="4">
    <citation type="journal article" date="2005" name="Proteins">
        <title>Structural analysis of a set of proteins resulting from a bacterial genomics project.</title>
        <authorList>
            <person name="Badger J."/>
            <person name="Sauder J.M."/>
            <person name="Adams J.M."/>
            <person name="Antonysamy S."/>
            <person name="Bain K."/>
            <person name="Bergseid M.G."/>
            <person name="Buchanan S.G."/>
            <person name="Buchanan M.D."/>
            <person name="Batiyenko Y."/>
            <person name="Christopher J.A."/>
            <person name="Emtage S."/>
            <person name="Eroshkina A."/>
            <person name="Feil I."/>
            <person name="Furlong E.B."/>
            <person name="Gajiwala K.S."/>
            <person name="Gao X."/>
            <person name="He D."/>
            <person name="Hendle J."/>
            <person name="Huber A."/>
            <person name="Hoda K."/>
            <person name="Kearins P."/>
            <person name="Kissinger C."/>
            <person name="Laubert B."/>
            <person name="Lewis H.A."/>
            <person name="Lin J."/>
            <person name="Loomis K."/>
            <person name="Lorimer D."/>
            <person name="Louie G."/>
            <person name="Maletic M."/>
            <person name="Marsh C.D."/>
            <person name="Miller I."/>
            <person name="Molinari J."/>
            <person name="Muller-Dieckmann H.J."/>
            <person name="Newman J.M."/>
            <person name="Noland B.W."/>
            <person name="Pagarigan B."/>
            <person name="Park F."/>
            <person name="Peat T.S."/>
            <person name="Post K.W."/>
            <person name="Radojicic S."/>
            <person name="Ramos A."/>
            <person name="Romero R."/>
            <person name="Rutter M.E."/>
            <person name="Sanderson W.E."/>
            <person name="Schwinn K.D."/>
            <person name="Tresser J."/>
            <person name="Winhoven J."/>
            <person name="Wright T.A."/>
            <person name="Wu L."/>
            <person name="Xu J."/>
            <person name="Harris T.J.R."/>
        </authorList>
    </citation>
    <scope>X-RAY CRYSTALLOGRAPHY (2.6 ANGSTROMS) OF 2-256</scope>
</reference>
<comment type="function">
    <text evidence="1">Specifically methylates the N3 position of the uracil ring of uridine 1498 (m3U1498) in 16S rRNA. Acts on the fully assembled 30S ribosomal subunit (By similarity).</text>
</comment>
<comment type="catalytic activity">
    <reaction>
        <text>uridine(1498) in 16S rRNA + S-adenosyl-L-methionine = N(3)-methyluridine(1498) in 16S rRNA + S-adenosyl-L-homocysteine + H(+)</text>
        <dbReference type="Rhea" id="RHEA:42920"/>
        <dbReference type="Rhea" id="RHEA-COMP:10283"/>
        <dbReference type="Rhea" id="RHEA-COMP:10284"/>
        <dbReference type="ChEBI" id="CHEBI:15378"/>
        <dbReference type="ChEBI" id="CHEBI:57856"/>
        <dbReference type="ChEBI" id="CHEBI:59789"/>
        <dbReference type="ChEBI" id="CHEBI:65315"/>
        <dbReference type="ChEBI" id="CHEBI:74502"/>
        <dbReference type="EC" id="2.1.1.193"/>
    </reaction>
</comment>
<comment type="subcellular location">
    <subcellularLocation>
        <location evidence="1">Cytoplasm</location>
    </subcellularLocation>
</comment>
<comment type="similarity">
    <text evidence="2">Belongs to the RNA methyltransferase RsmE family.</text>
</comment>
<organism>
    <name type="scientific">Bacillus subtilis (strain 168)</name>
    <dbReference type="NCBI Taxonomy" id="224308"/>
    <lineage>
        <taxon>Bacteria</taxon>
        <taxon>Bacillati</taxon>
        <taxon>Bacillota</taxon>
        <taxon>Bacilli</taxon>
        <taxon>Bacillales</taxon>
        <taxon>Bacillaceae</taxon>
        <taxon>Bacillus</taxon>
    </lineage>
</organism>
<proteinExistence type="evidence at protein level"/>
<keyword id="KW-0002">3D-structure</keyword>
<keyword id="KW-0963">Cytoplasm</keyword>
<keyword id="KW-0489">Methyltransferase</keyword>
<keyword id="KW-1185">Reference proteome</keyword>
<keyword id="KW-0698">rRNA processing</keyword>
<keyword id="KW-0949">S-adenosyl-L-methionine</keyword>
<keyword id="KW-0808">Transferase</keyword>
<sequence>MQRYFIELTKQQIEEAPTFSITGEEVHHIVNVMRMNEGDQIICCSQDGFEAKCELQSVSKDKVSCLVIEWTNENRELPIKVYIASGLPKGDKLEWIIQKGTELGAHAFIPFQAARSVVKLDDKKAKKKRERWTKIAKEAAEQSYRNEVPRVMDVHSFQQLLQRMQDFDKCVVAYEESSKQGEISAFSAIVSSLPKGSSLLIVFGPEGGLTEAEVERLTEQDGVTCGLGPRILRTETAPLYALSAISYQTELLRGDQ</sequence>
<dbReference type="EC" id="2.1.1.193"/>
<dbReference type="EMBL" id="D84432">
    <property type="protein sequence ID" value="BAA12467.1"/>
    <property type="molecule type" value="Genomic_DNA"/>
</dbReference>
<dbReference type="EMBL" id="D83717">
    <property type="protein sequence ID" value="BAA12079.1"/>
    <property type="molecule type" value="Genomic_DNA"/>
</dbReference>
<dbReference type="EMBL" id="AL009126">
    <property type="protein sequence ID" value="CAB14486.1"/>
    <property type="molecule type" value="Genomic_DNA"/>
</dbReference>
<dbReference type="PIR" id="D69952">
    <property type="entry name" value="D69952"/>
</dbReference>
<dbReference type="RefSeq" id="NP_390422.1">
    <property type="nucleotide sequence ID" value="NC_000964.3"/>
</dbReference>
<dbReference type="RefSeq" id="WP_003230015.1">
    <property type="nucleotide sequence ID" value="NZ_OZ025638.1"/>
</dbReference>
<dbReference type="PDB" id="1VHK">
    <property type="method" value="X-ray"/>
    <property type="resolution" value="2.60 A"/>
    <property type="chains" value="A/B/C/D=2-256"/>
</dbReference>
<dbReference type="PDBsum" id="1VHK"/>
<dbReference type="SMR" id="P54461"/>
<dbReference type="FunCoup" id="P54461">
    <property type="interactions" value="545"/>
</dbReference>
<dbReference type="STRING" id="224308.BSU25440"/>
<dbReference type="PaxDb" id="224308-BSU25440"/>
<dbReference type="EnsemblBacteria" id="CAB14486">
    <property type="protein sequence ID" value="CAB14486"/>
    <property type="gene ID" value="BSU_25440"/>
</dbReference>
<dbReference type="GeneID" id="937856"/>
<dbReference type="KEGG" id="bsu:BSU25440"/>
<dbReference type="PATRIC" id="fig|224308.179.peg.2765"/>
<dbReference type="eggNOG" id="COG1385">
    <property type="taxonomic scope" value="Bacteria"/>
</dbReference>
<dbReference type="InParanoid" id="P54461"/>
<dbReference type="OrthoDB" id="9815641at2"/>
<dbReference type="PhylomeDB" id="P54461"/>
<dbReference type="BioCyc" id="BSUB:BSU25440-MONOMER"/>
<dbReference type="EvolutionaryTrace" id="P54461"/>
<dbReference type="Proteomes" id="UP000001570">
    <property type="component" value="Chromosome"/>
</dbReference>
<dbReference type="GO" id="GO:0005737">
    <property type="term" value="C:cytoplasm"/>
    <property type="evidence" value="ECO:0007669"/>
    <property type="project" value="UniProtKB-SubCell"/>
</dbReference>
<dbReference type="GO" id="GO:0070042">
    <property type="term" value="F:rRNA (uridine-N3-)-methyltransferase activity"/>
    <property type="evidence" value="ECO:0000318"/>
    <property type="project" value="GO_Central"/>
</dbReference>
<dbReference type="GO" id="GO:0070475">
    <property type="term" value="P:rRNA base methylation"/>
    <property type="evidence" value="ECO:0000318"/>
    <property type="project" value="GO_Central"/>
</dbReference>
<dbReference type="CDD" id="cd18084">
    <property type="entry name" value="RsmE-like"/>
    <property type="match status" value="1"/>
</dbReference>
<dbReference type="FunFam" id="3.40.1280.10:FF:000024">
    <property type="entry name" value="Ribosomal RNA small subunit methyltransferase E"/>
    <property type="match status" value="1"/>
</dbReference>
<dbReference type="Gene3D" id="3.40.1280.10">
    <property type="match status" value="1"/>
</dbReference>
<dbReference type="Gene3D" id="2.40.240.20">
    <property type="entry name" value="Hypothetical PUA domain-like, domain 1"/>
    <property type="match status" value="1"/>
</dbReference>
<dbReference type="InterPro" id="IPR029028">
    <property type="entry name" value="Alpha/beta_knot_MTases"/>
</dbReference>
<dbReference type="InterPro" id="IPR015947">
    <property type="entry name" value="PUA-like_sf"/>
</dbReference>
<dbReference type="InterPro" id="IPR006700">
    <property type="entry name" value="RsmE"/>
</dbReference>
<dbReference type="InterPro" id="IPR046886">
    <property type="entry name" value="RsmE_MTase_dom"/>
</dbReference>
<dbReference type="InterPro" id="IPR046887">
    <property type="entry name" value="RsmE_PUA-like"/>
</dbReference>
<dbReference type="InterPro" id="IPR029026">
    <property type="entry name" value="tRNA_m1G_MTases_N"/>
</dbReference>
<dbReference type="NCBIfam" id="NF008691">
    <property type="entry name" value="PRK11713.1-4"/>
    <property type="match status" value="1"/>
</dbReference>
<dbReference type="NCBIfam" id="NF008692">
    <property type="entry name" value="PRK11713.1-5"/>
    <property type="match status" value="1"/>
</dbReference>
<dbReference type="NCBIfam" id="TIGR00046">
    <property type="entry name" value="RsmE family RNA methyltransferase"/>
    <property type="match status" value="1"/>
</dbReference>
<dbReference type="PANTHER" id="PTHR30027:SF3">
    <property type="entry name" value="16S RRNA (URACIL(1498)-N(3))-METHYLTRANSFERASE"/>
    <property type="match status" value="1"/>
</dbReference>
<dbReference type="PANTHER" id="PTHR30027">
    <property type="entry name" value="RIBOSOMAL RNA SMALL SUBUNIT METHYLTRANSFERASE E"/>
    <property type="match status" value="1"/>
</dbReference>
<dbReference type="Pfam" id="PF04452">
    <property type="entry name" value="Methyltrans_RNA"/>
    <property type="match status" value="1"/>
</dbReference>
<dbReference type="Pfam" id="PF20260">
    <property type="entry name" value="PUA_4"/>
    <property type="match status" value="1"/>
</dbReference>
<dbReference type="PIRSF" id="PIRSF015601">
    <property type="entry name" value="MTase_slr0722"/>
    <property type="match status" value="1"/>
</dbReference>
<dbReference type="SUPFAM" id="SSF75217">
    <property type="entry name" value="alpha/beta knot"/>
    <property type="match status" value="1"/>
</dbReference>
<dbReference type="SUPFAM" id="SSF88697">
    <property type="entry name" value="PUA domain-like"/>
    <property type="match status" value="1"/>
</dbReference>
<accession>P54461</accession>